<comment type="function">
    <text evidence="1">Functions in the biosynthesis of branched-chain amino acids. Catalyzes the dehydration of (2R,3R)-2,3-dihydroxy-3-methylpentanoate (2,3-dihydroxy-3-methylvalerate) into 2-oxo-3-methylpentanoate (2-oxo-3-methylvalerate) and of (2R)-2,3-dihydroxy-3-methylbutanoate (2,3-dihydroxyisovalerate) into 2-oxo-3-methylbutanoate (2-oxoisovalerate), the penultimate precursor to L-isoleucine and L-valine, respectively.</text>
</comment>
<comment type="catalytic activity">
    <reaction evidence="1">
        <text>(2R)-2,3-dihydroxy-3-methylbutanoate = 3-methyl-2-oxobutanoate + H2O</text>
        <dbReference type="Rhea" id="RHEA:24809"/>
        <dbReference type="ChEBI" id="CHEBI:11851"/>
        <dbReference type="ChEBI" id="CHEBI:15377"/>
        <dbReference type="ChEBI" id="CHEBI:49072"/>
        <dbReference type="EC" id="4.2.1.9"/>
    </reaction>
    <physiologicalReaction direction="left-to-right" evidence="1">
        <dbReference type="Rhea" id="RHEA:24810"/>
    </physiologicalReaction>
</comment>
<comment type="catalytic activity">
    <reaction evidence="1">
        <text>(2R,3R)-2,3-dihydroxy-3-methylpentanoate = (S)-3-methyl-2-oxopentanoate + H2O</text>
        <dbReference type="Rhea" id="RHEA:27694"/>
        <dbReference type="ChEBI" id="CHEBI:15377"/>
        <dbReference type="ChEBI" id="CHEBI:35146"/>
        <dbReference type="ChEBI" id="CHEBI:49258"/>
        <dbReference type="EC" id="4.2.1.9"/>
    </reaction>
    <physiologicalReaction direction="left-to-right" evidence="1">
        <dbReference type="Rhea" id="RHEA:27695"/>
    </physiologicalReaction>
</comment>
<comment type="cofactor">
    <cofactor evidence="1">
        <name>[2Fe-2S] cluster</name>
        <dbReference type="ChEBI" id="CHEBI:190135"/>
    </cofactor>
    <text evidence="1">Binds 1 [2Fe-2S] cluster per subunit. This cluster acts as a Lewis acid cofactor.</text>
</comment>
<comment type="cofactor">
    <cofactor evidence="1">
        <name>Mg(2+)</name>
        <dbReference type="ChEBI" id="CHEBI:18420"/>
    </cofactor>
</comment>
<comment type="pathway">
    <text evidence="1">Amino-acid biosynthesis; L-isoleucine biosynthesis; L-isoleucine from 2-oxobutanoate: step 3/4.</text>
</comment>
<comment type="pathway">
    <text evidence="1">Amino-acid biosynthesis; L-valine biosynthesis; L-valine from pyruvate: step 3/4.</text>
</comment>
<comment type="subunit">
    <text evidence="1">Homodimer.</text>
</comment>
<comment type="similarity">
    <text evidence="1">Belongs to the IlvD/Edd family.</text>
</comment>
<comment type="caution">
    <text evidence="2">Tyr-195 is present instead of the conserved Cys which is expected to be a metal-binding residue.</text>
</comment>
<feature type="chain" id="PRO_0000103440" description="Dihydroxy-acid dehydratase 2">
    <location>
        <begin position="1"/>
        <end position="562"/>
    </location>
</feature>
<feature type="active site" description="Proton acceptor" evidence="1">
    <location>
        <position position="473"/>
    </location>
</feature>
<feature type="binding site" evidence="1">
    <location>
        <position position="50"/>
    </location>
    <ligand>
        <name>[2Fe-2S] cluster</name>
        <dbReference type="ChEBI" id="CHEBI:190135"/>
    </ligand>
</feature>
<feature type="binding site" evidence="1">
    <location>
        <position position="82"/>
    </location>
    <ligand>
        <name>Mg(2+)</name>
        <dbReference type="ChEBI" id="CHEBI:18420"/>
    </ligand>
</feature>
<feature type="binding site" evidence="1">
    <location>
        <position position="123"/>
    </location>
    <ligand>
        <name>[2Fe-2S] cluster</name>
        <dbReference type="ChEBI" id="CHEBI:190135"/>
    </ligand>
</feature>
<feature type="binding site" evidence="1">
    <location>
        <position position="124"/>
    </location>
    <ligand>
        <name>Mg(2+)</name>
        <dbReference type="ChEBI" id="CHEBI:18420"/>
    </ligand>
</feature>
<feature type="binding site" description="via carbamate group" evidence="1">
    <location>
        <position position="125"/>
    </location>
    <ligand>
        <name>Mg(2+)</name>
        <dbReference type="ChEBI" id="CHEBI:18420"/>
    </ligand>
</feature>
<feature type="binding site" evidence="1">
    <location>
        <position position="447"/>
    </location>
    <ligand>
        <name>Mg(2+)</name>
        <dbReference type="ChEBI" id="CHEBI:18420"/>
    </ligand>
</feature>
<feature type="modified residue" description="N6-carboxylysine" evidence="1">
    <location>
        <position position="125"/>
    </location>
</feature>
<evidence type="ECO:0000255" key="1">
    <source>
        <dbReference type="HAMAP-Rule" id="MF_00012"/>
    </source>
</evidence>
<evidence type="ECO:0000305" key="2"/>
<organism>
    <name type="scientific">Bordetella pertussis (strain Tohama I / ATCC BAA-589 / NCTC 13251)</name>
    <dbReference type="NCBI Taxonomy" id="257313"/>
    <lineage>
        <taxon>Bacteria</taxon>
        <taxon>Pseudomonadati</taxon>
        <taxon>Pseudomonadota</taxon>
        <taxon>Betaproteobacteria</taxon>
        <taxon>Burkholderiales</taxon>
        <taxon>Alcaligenaceae</taxon>
        <taxon>Bordetella</taxon>
    </lineage>
</organism>
<gene>
    <name evidence="1" type="primary">ilvD2</name>
    <name type="ordered locus">BP3043</name>
</gene>
<protein>
    <recommendedName>
        <fullName evidence="1">Dihydroxy-acid dehydratase 2</fullName>
        <shortName evidence="1">DAD 2</shortName>
        <ecNumber evidence="1">4.2.1.9</ecNumber>
    </recommendedName>
</protein>
<proteinExistence type="inferred from homology"/>
<reference key="1">
    <citation type="journal article" date="2003" name="Nat. Genet.">
        <title>Comparative analysis of the genome sequences of Bordetella pertussis, Bordetella parapertussis and Bordetella bronchiseptica.</title>
        <authorList>
            <person name="Parkhill J."/>
            <person name="Sebaihia M."/>
            <person name="Preston A."/>
            <person name="Murphy L.D."/>
            <person name="Thomson N.R."/>
            <person name="Harris D.E."/>
            <person name="Holden M.T.G."/>
            <person name="Churcher C.M."/>
            <person name="Bentley S.D."/>
            <person name="Mungall K.L."/>
            <person name="Cerdeno-Tarraga A.-M."/>
            <person name="Temple L."/>
            <person name="James K.D."/>
            <person name="Harris B."/>
            <person name="Quail M.A."/>
            <person name="Achtman M."/>
            <person name="Atkin R."/>
            <person name="Baker S."/>
            <person name="Basham D."/>
            <person name="Bason N."/>
            <person name="Cherevach I."/>
            <person name="Chillingworth T."/>
            <person name="Collins M."/>
            <person name="Cronin A."/>
            <person name="Davis P."/>
            <person name="Doggett J."/>
            <person name="Feltwell T."/>
            <person name="Goble A."/>
            <person name="Hamlin N."/>
            <person name="Hauser H."/>
            <person name="Holroyd S."/>
            <person name="Jagels K."/>
            <person name="Leather S."/>
            <person name="Moule S."/>
            <person name="Norberczak H."/>
            <person name="O'Neil S."/>
            <person name="Ormond D."/>
            <person name="Price C."/>
            <person name="Rabbinowitsch E."/>
            <person name="Rutter S."/>
            <person name="Sanders M."/>
            <person name="Saunders D."/>
            <person name="Seeger K."/>
            <person name="Sharp S."/>
            <person name="Simmonds M."/>
            <person name="Skelton J."/>
            <person name="Squares R."/>
            <person name="Squares S."/>
            <person name="Stevens K."/>
            <person name="Unwin L."/>
            <person name="Whitehead S."/>
            <person name="Barrell B.G."/>
            <person name="Maskell D.J."/>
        </authorList>
    </citation>
    <scope>NUCLEOTIDE SEQUENCE [LARGE SCALE GENOMIC DNA]</scope>
    <source>
        <strain>Tohama I / ATCC BAA-589 / NCTC 13251</strain>
    </source>
</reference>
<name>ILVD2_BORPE</name>
<sequence>MSDNNRSRHITEGVARAPNRAMYYALGYTEADFQNPMIGVANGHSTITPCNSGLQRLADAAIEAIRVSRANPQVFGTPTISDGMSMGTEGMKYSLVSREVIADCIETAAQGQWMDGVVVIGGCDKNMPGGMMALARMNVPGIYVYGGTIKPGHYKGKDLTIVSVFEAVGEYTMGRMDETDFKAIEQCAIPGSGSYGGMYTANTMSSAFEAMGMSLPYSSTMANEDQEKVASAAESARVLVEAVRRQLRPRDIITLASIENAVAVIMATGGSTNAVLHFLAIAHAAEVPWNIDDFERIRKRVPVICDLKPSGRYVATDLHRAGGIPQVMKILLNAGLLHGDCITITGKTVAETLANVPDAPPPGQDVIMPIERALYPQGHLAILKGNLSPEGCVAKITGLKNPVITGPARVFDSEDDAMAAIMDRRIRDGDVVVIRYEGPKGGPGMREMLAPTSALVGQGLGETVGLITDGRFSGGTWGMVVGHVAPEEFVGGPIALIREGDSVTIDAHQLLLLLLNISDEEMAARRKAWAQPKPRYVRGVLAKFGKLACTASRGAVTDAFEE</sequence>
<accession>Q7VUN6</accession>
<dbReference type="EC" id="4.2.1.9" evidence="1"/>
<dbReference type="EMBL" id="BX640420">
    <property type="protein sequence ID" value="CAE43312.1"/>
    <property type="molecule type" value="Genomic_DNA"/>
</dbReference>
<dbReference type="RefSeq" id="NP_881616.1">
    <property type="nucleotide sequence ID" value="NC_002929.2"/>
</dbReference>
<dbReference type="SMR" id="Q7VUN6"/>
<dbReference type="STRING" id="257313.BP3043"/>
<dbReference type="PaxDb" id="257313-BP3043"/>
<dbReference type="KEGG" id="bpe:BP3043"/>
<dbReference type="PATRIC" id="fig|257313.5.peg.3287"/>
<dbReference type="eggNOG" id="COG0129">
    <property type="taxonomic scope" value="Bacteria"/>
</dbReference>
<dbReference type="HOGENOM" id="CLU_014271_4_2_4"/>
<dbReference type="UniPathway" id="UPA00047">
    <property type="reaction ID" value="UER00057"/>
</dbReference>
<dbReference type="UniPathway" id="UPA00049">
    <property type="reaction ID" value="UER00061"/>
</dbReference>
<dbReference type="Proteomes" id="UP000002676">
    <property type="component" value="Chromosome"/>
</dbReference>
<dbReference type="GO" id="GO:0051537">
    <property type="term" value="F:2 iron, 2 sulfur cluster binding"/>
    <property type="evidence" value="ECO:0007669"/>
    <property type="project" value="UniProtKB-UniRule"/>
</dbReference>
<dbReference type="GO" id="GO:0004160">
    <property type="term" value="F:dihydroxy-acid dehydratase activity"/>
    <property type="evidence" value="ECO:0007669"/>
    <property type="project" value="UniProtKB-UniRule"/>
</dbReference>
<dbReference type="GO" id="GO:0000287">
    <property type="term" value="F:magnesium ion binding"/>
    <property type="evidence" value="ECO:0007669"/>
    <property type="project" value="UniProtKB-UniRule"/>
</dbReference>
<dbReference type="GO" id="GO:0009097">
    <property type="term" value="P:isoleucine biosynthetic process"/>
    <property type="evidence" value="ECO:0007669"/>
    <property type="project" value="UniProtKB-UniRule"/>
</dbReference>
<dbReference type="GO" id="GO:0009099">
    <property type="term" value="P:L-valine biosynthetic process"/>
    <property type="evidence" value="ECO:0007669"/>
    <property type="project" value="UniProtKB-UniRule"/>
</dbReference>
<dbReference type="FunFam" id="3.50.30.80:FF:000001">
    <property type="entry name" value="Dihydroxy-acid dehydratase"/>
    <property type="match status" value="1"/>
</dbReference>
<dbReference type="Gene3D" id="3.50.30.80">
    <property type="entry name" value="IlvD/EDD C-terminal domain-like"/>
    <property type="match status" value="1"/>
</dbReference>
<dbReference type="HAMAP" id="MF_00012">
    <property type="entry name" value="IlvD"/>
    <property type="match status" value="1"/>
</dbReference>
<dbReference type="InterPro" id="IPR050165">
    <property type="entry name" value="DHAD_IlvD/Edd"/>
</dbReference>
<dbReference type="InterPro" id="IPR042096">
    <property type="entry name" value="Dihydro-acid_dehy_C"/>
</dbReference>
<dbReference type="InterPro" id="IPR004404">
    <property type="entry name" value="DihydroxyA_deHydtase"/>
</dbReference>
<dbReference type="InterPro" id="IPR020558">
    <property type="entry name" value="DiOHA_6PGluconate_deHydtase_CS"/>
</dbReference>
<dbReference type="InterPro" id="IPR056740">
    <property type="entry name" value="ILV_EDD_C"/>
</dbReference>
<dbReference type="InterPro" id="IPR000581">
    <property type="entry name" value="ILV_EDD_N"/>
</dbReference>
<dbReference type="InterPro" id="IPR037237">
    <property type="entry name" value="IlvD/EDD_N"/>
</dbReference>
<dbReference type="NCBIfam" id="TIGR00110">
    <property type="entry name" value="ilvD"/>
    <property type="match status" value="1"/>
</dbReference>
<dbReference type="NCBIfam" id="NF002068">
    <property type="entry name" value="PRK00911.1"/>
    <property type="match status" value="1"/>
</dbReference>
<dbReference type="PANTHER" id="PTHR21000">
    <property type="entry name" value="DIHYDROXY-ACID DEHYDRATASE DAD"/>
    <property type="match status" value="1"/>
</dbReference>
<dbReference type="PANTHER" id="PTHR21000:SF5">
    <property type="entry name" value="DIHYDROXY-ACID DEHYDRATASE, MITOCHONDRIAL"/>
    <property type="match status" value="1"/>
</dbReference>
<dbReference type="Pfam" id="PF24877">
    <property type="entry name" value="ILV_EDD_C"/>
    <property type="match status" value="1"/>
</dbReference>
<dbReference type="Pfam" id="PF00920">
    <property type="entry name" value="ILVD_EDD_N"/>
    <property type="match status" value="1"/>
</dbReference>
<dbReference type="SUPFAM" id="SSF143975">
    <property type="entry name" value="IlvD/EDD N-terminal domain-like"/>
    <property type="match status" value="1"/>
</dbReference>
<dbReference type="SUPFAM" id="SSF52016">
    <property type="entry name" value="LeuD/IlvD-like"/>
    <property type="match status" value="1"/>
</dbReference>
<dbReference type="PROSITE" id="PS00886">
    <property type="entry name" value="ILVD_EDD_1"/>
    <property type="match status" value="1"/>
</dbReference>
<dbReference type="PROSITE" id="PS00887">
    <property type="entry name" value="ILVD_EDD_2"/>
    <property type="match status" value="1"/>
</dbReference>
<keyword id="KW-0001">2Fe-2S</keyword>
<keyword id="KW-0028">Amino-acid biosynthesis</keyword>
<keyword id="KW-0100">Branched-chain amino acid biosynthesis</keyword>
<keyword id="KW-0408">Iron</keyword>
<keyword id="KW-0411">Iron-sulfur</keyword>
<keyword id="KW-0456">Lyase</keyword>
<keyword id="KW-0460">Magnesium</keyword>
<keyword id="KW-0479">Metal-binding</keyword>
<keyword id="KW-1185">Reference proteome</keyword>